<feature type="chain" id="PRO_0000459074" description="DNA-binding and peroxide stress resistance protein YaaA">
    <location>
        <begin position="1"/>
        <end position="257"/>
    </location>
</feature>
<feature type="short sequence motif" description="Helix-hairpin-helix" evidence="1">
    <location>
        <begin position="35"/>
        <end position="66"/>
    </location>
</feature>
<evidence type="ECO:0000250" key="1">
    <source>
        <dbReference type="UniProtKB" id="P0A8I3"/>
    </source>
</evidence>
<evidence type="ECO:0000255" key="2">
    <source>
        <dbReference type="HAMAP-Rule" id="MF_00652"/>
    </source>
</evidence>
<evidence type="ECO:0000269" key="3">
    <source>
    </source>
</evidence>
<evidence type="ECO:0000303" key="4">
    <source>
    </source>
</evidence>
<evidence type="ECO:0000305" key="5"/>
<evidence type="ECO:0000312" key="6">
    <source>
        <dbReference type="EMBL" id="AEW59414.1"/>
    </source>
</evidence>
<protein>
    <recommendedName>
        <fullName evidence="5">DNA-binding and peroxide stress resistance protein YaaA</fullName>
    </recommendedName>
    <alternativeName>
        <fullName evidence="2">UPF0246 protein KPHS_07160</fullName>
    </alternativeName>
</protein>
<reference evidence="6" key="1">
    <citation type="journal article" date="2012" name="J. Bacteriol.">
        <title>Complete genome sequence of Klebsiella pneumoniae subsp. pneumoniae HS11286, a multidrug-resistant strain isolated from human sputum.</title>
        <authorList>
            <person name="Liu P."/>
            <person name="Li P."/>
            <person name="Jiang X."/>
            <person name="Bi D."/>
            <person name="Xie Y."/>
            <person name="Tai C."/>
            <person name="Deng Z."/>
            <person name="Rajakumar K."/>
            <person name="Ou H.Y."/>
        </authorList>
    </citation>
    <scope>NUCLEOTIDE SEQUENCE [LARGE SCALE GENOMIC DNA]</scope>
    <source>
        <strain>HS11286</strain>
    </source>
</reference>
<reference key="2">
    <citation type="journal article" date="2020" name="Infect. Immun.">
        <title>Transposon Mutagenesis Screen of Klebsiella pneumoniae Identifies Multiple Genes Important for Resisting Antimicrobial Activities of Neutrophils in Mice.</title>
        <authorList>
            <person name="Paczosa M.K."/>
            <person name="Silver R.J."/>
            <person name="McCabe A.L."/>
            <person name="Tai A.K."/>
            <person name="McLeish C.H."/>
            <person name="Lazinski D.W."/>
            <person name="Mecsas J."/>
        </authorList>
    </citation>
    <scope>FUNCTION</scope>
    <scope>DISRUPTION PHENOTYPE</scope>
    <source>
        <strain>ATCC 43816</strain>
    </source>
</reference>
<keyword id="KW-0963">Cytoplasm</keyword>
<keyword id="KW-0238">DNA-binding</keyword>
<keyword id="KW-1185">Reference proteome</keyword>
<keyword id="KW-0843">Virulence</keyword>
<proteinExistence type="inferred from homology"/>
<name>YAAA_KLEPH</name>
<gene>
    <name evidence="4" type="primary">yaaA</name>
    <name evidence="6" type="ordered locus">KPHS_07160</name>
</gene>
<sequence length="257" mass="29547">MLILISPAKTLDYQSPLATTRYTQPELLEYSQQLIGIARKLSAPQIGKLMSISDKLADLNATRFHDWHPDFTPQNARQAILAFKGDVYTGLQAETLTEDDFDFAQQHLRMLSGLYGVLRPLDLMQPYRLEMGIRLENPRGKDLYQFWGDTITEKLNQALRDQGDDIVINLASDEYFKSVKTPKLQGQLIKPVFLDEKNGKFKVISFYAKKARGLMSRYIIENRLTQPEQLKAFNSEGYFFDADASEKGELVFKRHEQ</sequence>
<comment type="function">
    <text evidence="1 3">Protects bacteria from neutrophil-related defense upon infection of mammals (PubMed:31988174). Binds DNA (By similarity).</text>
</comment>
<comment type="subcellular location">
    <subcellularLocation>
        <location evidence="5">Cytoplasm</location>
    </subcellularLocation>
</comment>
<comment type="disruption phenotype">
    <text evidence="3">Significantly reduced survival of bacteria in the presence of 1 mM H(2)O(2); out competed by wild-type in the presence of H(2)O(2) (PubMed:31988174). In mouse infections bacteria survive about 100-fold less well than wild-type after 45 hours (PubMed:31988174). Increased bacterial burden in neutropenic mice (depleted of Ly6G polymorphonuclear cells) (PubMed:31988174).</text>
</comment>
<comment type="similarity">
    <text evidence="2">Belongs to the UPF0246 family.</text>
</comment>
<accession>A0A0H3GRF3</accession>
<dbReference type="EMBL" id="CP003200">
    <property type="protein sequence ID" value="AEW59414.1"/>
    <property type="molecule type" value="Genomic_DNA"/>
</dbReference>
<dbReference type="RefSeq" id="WP_002887869.1">
    <property type="nucleotide sequence ID" value="NC_016845.1"/>
</dbReference>
<dbReference type="RefSeq" id="YP_005225016.1">
    <property type="nucleotide sequence ID" value="NC_016845.1"/>
</dbReference>
<dbReference type="SMR" id="A0A0H3GRF3"/>
<dbReference type="STRING" id="1125630.KPHS_07160"/>
<dbReference type="GeneID" id="11845706"/>
<dbReference type="KEGG" id="kpm:KPHS_07160"/>
<dbReference type="PATRIC" id="fig|1125630.4.peg.696"/>
<dbReference type="HOGENOM" id="CLU_061989_0_0_6"/>
<dbReference type="Proteomes" id="UP000007841">
    <property type="component" value="Chromosome"/>
</dbReference>
<dbReference type="GO" id="GO:0005829">
    <property type="term" value="C:cytosol"/>
    <property type="evidence" value="ECO:0007669"/>
    <property type="project" value="TreeGrafter"/>
</dbReference>
<dbReference type="GO" id="GO:0003677">
    <property type="term" value="F:DNA binding"/>
    <property type="evidence" value="ECO:0007669"/>
    <property type="project" value="UniProtKB-KW"/>
</dbReference>
<dbReference type="GO" id="GO:0033194">
    <property type="term" value="P:response to hydroperoxide"/>
    <property type="evidence" value="ECO:0007669"/>
    <property type="project" value="TreeGrafter"/>
</dbReference>
<dbReference type="HAMAP" id="MF_00652">
    <property type="entry name" value="UPF0246"/>
    <property type="match status" value="1"/>
</dbReference>
<dbReference type="InterPro" id="IPR005583">
    <property type="entry name" value="YaaA"/>
</dbReference>
<dbReference type="NCBIfam" id="NF002541">
    <property type="entry name" value="PRK02101.1-1"/>
    <property type="match status" value="1"/>
</dbReference>
<dbReference type="NCBIfam" id="NF002542">
    <property type="entry name" value="PRK02101.1-3"/>
    <property type="match status" value="1"/>
</dbReference>
<dbReference type="PANTHER" id="PTHR30283:SF4">
    <property type="entry name" value="PEROXIDE STRESS RESISTANCE PROTEIN YAAA"/>
    <property type="match status" value="1"/>
</dbReference>
<dbReference type="PANTHER" id="PTHR30283">
    <property type="entry name" value="PEROXIDE STRESS RESPONSE PROTEIN YAAA"/>
    <property type="match status" value="1"/>
</dbReference>
<dbReference type="Pfam" id="PF03883">
    <property type="entry name" value="H2O2_YaaD"/>
    <property type="match status" value="1"/>
</dbReference>
<organism>
    <name type="scientific">Klebsiella pneumoniae subsp. pneumoniae (strain HS11286)</name>
    <dbReference type="NCBI Taxonomy" id="1125630"/>
    <lineage>
        <taxon>Bacteria</taxon>
        <taxon>Pseudomonadati</taxon>
        <taxon>Pseudomonadota</taxon>
        <taxon>Gammaproteobacteria</taxon>
        <taxon>Enterobacterales</taxon>
        <taxon>Enterobacteriaceae</taxon>
        <taxon>Klebsiella/Raoultella group</taxon>
        <taxon>Klebsiella</taxon>
        <taxon>Klebsiella pneumoniae complex</taxon>
    </lineage>
</organism>